<accession>Q9XB60</accession>
<protein>
    <recommendedName>
        <fullName evidence="7">Carboxymethylproline synthase</fullName>
        <ecNumber evidence="1 2">2.3.1.226</ecNumber>
    </recommendedName>
    <alternativeName>
        <fullName evidence="8">Carbapenem biosynthesis protein B</fullName>
    </alternativeName>
</protein>
<feature type="chain" id="PRO_0000431235" description="Carboxymethylproline synthase">
    <location>
        <begin position="1"/>
        <end position="250"/>
    </location>
</feature>
<feature type="binding site" evidence="4">
    <location>
        <begin position="60"/>
        <end position="64"/>
    </location>
    <ligand>
        <name>malonyl-CoA</name>
        <dbReference type="ChEBI" id="CHEBI:57384"/>
    </ligand>
</feature>
<feature type="site" description="Important for catalytic activity" evidence="5">
    <location>
        <position position="131"/>
    </location>
</feature>
<feature type="mutagenesis site" description="Forms the C6 epimers of 6-methyl-t-CMP in 16:84 ratio of (6R):(6S) epimers." evidence="6">
    <original>W</original>
    <variation>A</variation>
    <location>
        <position position="79"/>
    </location>
</feature>
<feature type="mutagenesis site" description="Forms the C6 epimers of 6-methyl-t-CMP in 17:83 ratio of (6R):(6S) epimers." evidence="6">
    <original>W</original>
    <variation>F</variation>
    <location>
        <position position="79"/>
    </location>
</feature>
<feature type="mutagenesis site" description="Forms the C6 epimers of 6-methyl-t-CMP in 45:55 ratio of (6R):(6S) epimers." evidence="6">
    <original>M</original>
    <variation>A</variation>
    <location>
        <position position="108"/>
    </location>
</feature>
<feature type="mutagenesis site" description="Forms the C6 epimers of 6-methyl-t-CMP in 92:8 ratio of (6R):(6S) epimers." evidence="6">
    <original>M</original>
    <variation>I</variation>
    <location>
        <position position="108"/>
    </location>
</feature>
<feature type="mutagenesis site" description="Forms the C6 epimers of 6-methyl-t-CMP in 47:53 ratio of (6R):(6S) epimers." evidence="6">
    <original>M</original>
    <variation>L</variation>
    <location>
        <position position="108"/>
    </location>
</feature>
<feature type="mutagenesis site" description="Forms the C6 epimers of 6-methyl-t-CMP in 95:5 ratio of (6R):(6S) epimers." evidence="6">
    <original>M</original>
    <variation>V</variation>
    <location>
        <position position="108"/>
    </location>
</feature>
<feature type="mutagenesis site" description="Forms the C6 epimers of 6-methyl-t-CMP in 75:25 ratio of (6R):(6S) epimers." evidence="6">
    <original>Q</original>
    <variation>N</variation>
    <location>
        <position position="111"/>
    </location>
</feature>
<feature type="mutagenesis site" description="Does not catalyze production of (2S,5S)-5-carboxymethylproline but catalyzes decarboxylation of malonyl-CoA to methylmalonyl-CoA." evidence="5">
    <original>E</original>
    <variation>A</variation>
    <variation>Q</variation>
    <location>
        <position position="131"/>
    </location>
</feature>
<feature type="mutagenesis site" description="Catalyzes production of (2S,5S)-5-carboxymethylproline and decarboxylation of malonyl-CoA to methylmalonyl-CoA, but with much lower specific activity for decarboxylation." evidence="5">
    <original>E</original>
    <variation>D</variation>
    <location>
        <position position="131"/>
    </location>
</feature>
<feature type="mutagenesis site" description="Forms the C6 epimers of 6-methyl-t-CMP in 70:30 ratio of (6R):(6S) epimers." evidence="6">
    <original>H</original>
    <variation>A</variation>
    <location>
        <position position="229"/>
    </location>
</feature>
<feature type="strand" evidence="11">
    <location>
        <begin position="2"/>
        <end position="7"/>
    </location>
</feature>
<feature type="strand" evidence="11">
    <location>
        <begin position="10"/>
        <end position="15"/>
    </location>
</feature>
<feature type="helix" evidence="11">
    <location>
        <begin position="26"/>
        <end position="41"/>
    </location>
</feature>
<feature type="strand" evidence="11">
    <location>
        <begin position="47"/>
        <end position="51"/>
    </location>
</feature>
<feature type="helix" evidence="11">
    <location>
        <begin position="64"/>
        <end position="68"/>
    </location>
</feature>
<feature type="helix" evidence="11">
    <location>
        <begin position="73"/>
        <end position="91"/>
    </location>
</feature>
<feature type="strand" evidence="11">
    <location>
        <begin position="97"/>
        <end position="101"/>
    </location>
</feature>
<feature type="strand" evidence="11">
    <location>
        <begin position="103"/>
        <end position="106"/>
    </location>
</feature>
<feature type="helix" evidence="11">
    <location>
        <begin position="108"/>
        <end position="113"/>
    </location>
</feature>
<feature type="strand" evidence="11">
    <location>
        <begin position="116"/>
        <end position="122"/>
    </location>
</feature>
<feature type="strand" evidence="11">
    <location>
        <begin position="126"/>
        <end position="128"/>
    </location>
</feature>
<feature type="helix" evidence="11">
    <location>
        <begin position="131"/>
        <end position="134"/>
    </location>
</feature>
<feature type="helix" evidence="11">
    <location>
        <begin position="139"/>
        <end position="149"/>
    </location>
</feature>
<feature type="helix" evidence="11">
    <location>
        <begin position="151"/>
        <end position="160"/>
    </location>
</feature>
<feature type="helix" evidence="11">
    <location>
        <begin position="166"/>
        <end position="171"/>
    </location>
</feature>
<feature type="strand" evidence="11">
    <location>
        <begin position="176"/>
        <end position="179"/>
    </location>
</feature>
<feature type="helix" evidence="11">
    <location>
        <begin position="181"/>
        <end position="196"/>
    </location>
</feature>
<feature type="helix" evidence="11">
    <location>
        <begin position="200"/>
        <end position="228"/>
    </location>
</feature>
<feature type="helix" evidence="11">
    <location>
        <begin position="231"/>
        <end position="237"/>
    </location>
</feature>
<proteinExistence type="evidence at protein level"/>
<gene>
    <name evidence="7" type="primary">carB</name>
</gene>
<reference key="1">
    <citation type="journal article" date="1997" name="Mol. Microbiol.">
        <title>Analysis of the carbapenem gene cluster of Erwinia carotovora: definition of the antibiotic biosynthetic genes and evidence for a novel beta-lactam resistance mechanism.</title>
        <authorList>
            <person name="McGowan S.J."/>
            <person name="Sebaihia M."/>
            <person name="O'Leary S."/>
            <person name="Hardie K.R."/>
            <person name="Williams P."/>
            <person name="Stewart G.S."/>
            <person name="Bycroft B.W."/>
            <person name="Salmond G.P."/>
        </authorList>
    </citation>
    <scope>NUCLEOTIDE SEQUENCE [GENOMIC DNA]</scope>
    <source>
        <strain evidence="10">ATCC 39048 / GS101 / SC 12</strain>
    </source>
</reference>
<reference key="2">
    <citation type="journal article" date="2004" name="Biochemistry">
        <title>Carboxymethylproline synthase from Pectobacterium carotorova: a multifaceted member of the crotonase superfamily.</title>
        <authorList>
            <person name="Gerratana B."/>
            <person name="Arnett S.O."/>
            <person name="Stapon A."/>
            <person name="Townsend C.A."/>
        </authorList>
    </citation>
    <scope>FUNCTION</scope>
    <scope>CATALYTIC ACTIVITY</scope>
    <scope>BIOPHYSICOCHEMICAL PROPERTIES</scope>
    <source>
        <strain>ATCC 39048 / GS101 / SC 12</strain>
    </source>
</reference>
<reference key="3">
    <citation type="journal article" date="2005" name="Chem. Commun. (Camb.)">
        <title>Synthesis of deuterium labelled L- and D-glutamate semialdehydes and their evaluation as substrates for carboxymethylproline synthase (CarB)--implications for carbapenem biosynthesis.</title>
        <authorList>
            <person name="Sorensen J.L."/>
            <person name="Sleeman M.C."/>
            <person name="Schofield C.J."/>
        </authorList>
    </citation>
    <scope>FUNCTION</scope>
    <source>
        <strain>ATCC 39048 / GS101 / SC 12</strain>
    </source>
</reference>
<reference key="4">
    <citation type="journal article" date="2004" name="J. Biol. Chem.">
        <title>Carboxymethylproline synthase (CarB), an unusual carbon-carbon bond-forming enzyme of the crotonase superfamily involved in carbapenem biosynthesis.</title>
        <authorList>
            <person name="Sleeman M.C."/>
            <person name="Schofield C.J."/>
        </authorList>
    </citation>
    <scope>FUNCTION</scope>
    <scope>CATALYTIC ACTIVITY</scope>
    <scope>PATHWAY</scope>
</reference>
<reference key="5">
    <citation type="journal article" date="2008" name="Angew. Chem. Int. Ed. Engl.">
        <title>Thioester hydrolysis and C-C bond formation by carboxymethylproline synthase from the crotonase superfamily.</title>
        <authorList>
            <person name="Batchelar E.T."/>
            <person name="Hamed R.B."/>
            <person name="Ducho C."/>
            <person name="Claridge T.D."/>
            <person name="Edelmann M.J."/>
            <person name="Kessler B."/>
            <person name="Schofield C.J."/>
        </authorList>
    </citation>
    <scope>FUNCTION</scope>
    <scope>REACTION MECHANISM</scope>
    <scope>MUTAGENESIS OF GLU-131</scope>
</reference>
<reference key="6">
    <citation type="journal article" date="2011" name="Nat. Chem.">
        <title>Stereoselective C-C bond formation catalysed by engineered carboxymethylproline synthases.</title>
        <authorList>
            <person name="Hamed R.B."/>
            <person name="Gomez-Castellanos J.R."/>
            <person name="Thalhammer A."/>
            <person name="Harding D."/>
            <person name="Ducho C."/>
            <person name="Claridge T.D."/>
            <person name="Schofield C.J."/>
        </authorList>
    </citation>
    <scope>FUNCTION</scope>
    <scope>MUTAGENESIS OF TRP-79; MET-108; GLN-111 AND HIS-229</scope>
</reference>
<reference key="7">
    <citation type="journal article" date="2005" name="J. Biol. Chem.">
        <title>Structural and mechanistic studies on carboxymethylproline synthase (CarB), a unique member of the crotonase superfamily catalyzing the first step in carbapenem biosynthesis.</title>
        <authorList>
            <person name="Sleeman M.C."/>
            <person name="Sorensen J.L."/>
            <person name="Batchelar E.T."/>
            <person name="McDonough M.A."/>
            <person name="Schofield C.J."/>
        </authorList>
    </citation>
    <scope>X-RAY CRYSTALLOGRAPHY (2.24 ANGSTROMS) IN COMPLEX WITH ACETYL-COA</scope>
    <scope>SUBUNIT</scope>
</reference>
<dbReference type="EC" id="2.3.1.226" evidence="1 2"/>
<dbReference type="EMBL" id="U17224">
    <property type="protein sequence ID" value="AAD38230.1"/>
    <property type="molecule type" value="Genomic_DNA"/>
</dbReference>
<dbReference type="RefSeq" id="WP_110163357.1">
    <property type="nucleotide sequence ID" value="NZ_QHMC01000009.1"/>
</dbReference>
<dbReference type="PDB" id="2A7K">
    <property type="method" value="X-ray"/>
    <property type="resolution" value="2.24 A"/>
    <property type="chains" value="A/B/C/D/E/F/G/H/I=1-250"/>
</dbReference>
<dbReference type="PDB" id="2A81">
    <property type="method" value="X-ray"/>
    <property type="resolution" value="3.15 A"/>
    <property type="chains" value="A/B/C=1-250"/>
</dbReference>
<dbReference type="PDBsum" id="2A7K"/>
<dbReference type="PDBsum" id="2A81"/>
<dbReference type="SMR" id="Q9XB60"/>
<dbReference type="BioCyc" id="MetaCyc:MONOMER-13571"/>
<dbReference type="BRENDA" id="2.3.1.226">
    <property type="organism ID" value="2140"/>
</dbReference>
<dbReference type="SABIO-RK" id="Q9XB60"/>
<dbReference type="UniPathway" id="UPA00182"/>
<dbReference type="EvolutionaryTrace" id="Q9XB60"/>
<dbReference type="GO" id="GO:0016740">
    <property type="term" value="F:transferase activity"/>
    <property type="evidence" value="ECO:0007669"/>
    <property type="project" value="UniProtKB-KW"/>
</dbReference>
<dbReference type="GO" id="GO:0017000">
    <property type="term" value="P:antibiotic biosynthetic process"/>
    <property type="evidence" value="ECO:0007669"/>
    <property type="project" value="UniProtKB-KW"/>
</dbReference>
<dbReference type="GO" id="GO:0006635">
    <property type="term" value="P:fatty acid beta-oxidation"/>
    <property type="evidence" value="ECO:0007669"/>
    <property type="project" value="TreeGrafter"/>
</dbReference>
<dbReference type="CDD" id="cd06558">
    <property type="entry name" value="crotonase-like"/>
    <property type="match status" value="1"/>
</dbReference>
<dbReference type="Gene3D" id="1.20.5.1610">
    <property type="match status" value="1"/>
</dbReference>
<dbReference type="Gene3D" id="3.90.226.10">
    <property type="entry name" value="2-enoyl-CoA Hydratase, Chain A, domain 1"/>
    <property type="match status" value="1"/>
</dbReference>
<dbReference type="InterPro" id="IPR029045">
    <property type="entry name" value="ClpP/crotonase-like_dom_sf"/>
</dbReference>
<dbReference type="InterPro" id="IPR001753">
    <property type="entry name" value="Enoyl-CoA_hydra/iso"/>
</dbReference>
<dbReference type="PANTHER" id="PTHR11941:SF54">
    <property type="entry name" value="ENOYL-COA HYDRATASE, MITOCHONDRIAL"/>
    <property type="match status" value="1"/>
</dbReference>
<dbReference type="PANTHER" id="PTHR11941">
    <property type="entry name" value="ENOYL-COA HYDRATASE-RELATED"/>
    <property type="match status" value="1"/>
</dbReference>
<dbReference type="Pfam" id="PF00378">
    <property type="entry name" value="ECH_1"/>
    <property type="match status" value="1"/>
</dbReference>
<dbReference type="SUPFAM" id="SSF52096">
    <property type="entry name" value="ClpP/crotonase"/>
    <property type="match status" value="1"/>
</dbReference>
<organism>
    <name type="scientific">Pectobacterium carotovorum subsp. carotovorum</name>
    <name type="common">Erwinia carotovora subsp. carotovora</name>
    <dbReference type="NCBI Taxonomy" id="555"/>
    <lineage>
        <taxon>Bacteria</taxon>
        <taxon>Pseudomonadati</taxon>
        <taxon>Pseudomonadota</taxon>
        <taxon>Gammaproteobacteria</taxon>
        <taxon>Enterobacterales</taxon>
        <taxon>Pectobacteriaceae</taxon>
        <taxon>Pectobacterium</taxon>
    </lineage>
</organism>
<comment type="function">
    <text evidence="1 2 3 5 6">Catalyzes the formation of (2S,5S)-carboxymethylproline (t-CMP) from malonyl-CoA and (S)-1-pyrroline-5-carboxylate, the first step in the biosynthesis of (5R)-carbapen-2-em-3-carboxylate, a beta-lactam antibiotic of the carbapenem class (PubMed:14625287, PubMed:15595850). Also catalyzes the independent decarboxylation of malonyl-CoA and methylmalonyl-CoA and the hydrolysis of CoA esters such as acetyl-CoA and propionyl-CoA (PubMed:15595850). Catalyzes the reaction with a C2 epimeric mixture of methylmalonyl-CoA to give a 55:45 mixture of (6R)- and (6S)-epimers of 6-methyl-t-CMP, under standard incubation conditions (PubMed:21505494).</text>
</comment>
<comment type="catalytic activity">
    <reaction evidence="1 2">
        <text>(S)-1-pyrroline-5-carboxylate + malonyl-CoA + H2O + H(+) = (2S,5S)-5-carboxymethylproline + CO2 + CoA</text>
        <dbReference type="Rhea" id="RHEA:36663"/>
        <dbReference type="ChEBI" id="CHEBI:15377"/>
        <dbReference type="ChEBI" id="CHEBI:15378"/>
        <dbReference type="ChEBI" id="CHEBI:16526"/>
        <dbReference type="ChEBI" id="CHEBI:17388"/>
        <dbReference type="ChEBI" id="CHEBI:57287"/>
        <dbReference type="ChEBI" id="CHEBI:57384"/>
        <dbReference type="ChEBI" id="CHEBI:73962"/>
        <dbReference type="EC" id="2.3.1.226"/>
    </reaction>
</comment>
<comment type="biophysicochemical properties">
    <kinetics>
        <KM evidence="2">0.0027 mM for malonyl-CoA</KM>
        <KM evidence="2">0.0015 mM for (S)-1-pyrroline-5-carboxylate</KM>
        <text evidence="2">kcat is 1.7 sec(-1) with malonyl-CoA as substrate. kcat is 1.52 sec(-1) with (S)-1-pyrroline-5-carboxylate as substrate.</text>
    </kinetics>
</comment>
<comment type="pathway">
    <text evidence="9">Antibiotic biosynthesis; carbapenem biosynthesis.</text>
</comment>
<comment type="subunit">
    <text evidence="4">Homotrimer.</text>
</comment>
<comment type="miscellaneous">
    <text evidence="5">Unusual member of the enoyl-CoA hydratase/isomerase family: in addition to decarboxylation and thioester hydrolysis steps, catalyzes C-C bond formation leading to a substituted heterocycle. Glu-131 is important in both C-C bond formation and thioester hydrolysis steps while it does not play an essential role in decarboxylation.</text>
</comment>
<comment type="similarity">
    <text evidence="8">Belongs to the enoyl-CoA hydratase/isomerase family.</text>
</comment>
<sequence length="250" mass="27575">MVFEENSDEVRVITLDHPNKHNPFSRTLETSVKDALARANADDSVRAVVVYGGAERSFSAGGDFNEVKQLSRSEDIEEWIDRVIDLYQAVLNVNKPTIAAVDGYAIGMGFQFALMFDQRLMASTANFVMPELKHGIGCSVGAAILGFTHGFSTMQEIIYQCQSLDAPRCVDYRLVNQVVESSALLDAAITQAHVMASYPASAFINTKRAVNKPFIHLLEQTRDASKAVHKAAFQARDAQGHFKNVLGKKY</sequence>
<evidence type="ECO:0000269" key="1">
    <source>
    </source>
</evidence>
<evidence type="ECO:0000269" key="2">
    <source>
    </source>
</evidence>
<evidence type="ECO:0000269" key="3">
    <source>
    </source>
</evidence>
<evidence type="ECO:0000269" key="4">
    <source>
    </source>
</evidence>
<evidence type="ECO:0000269" key="5">
    <source>
    </source>
</evidence>
<evidence type="ECO:0000269" key="6">
    <source>
    </source>
</evidence>
<evidence type="ECO:0000303" key="7">
    <source>
    </source>
</evidence>
<evidence type="ECO:0000305" key="8"/>
<evidence type="ECO:0000305" key="9">
    <source>
    </source>
</evidence>
<evidence type="ECO:0000312" key="10">
    <source>
        <dbReference type="EMBL" id="AAD38230.1"/>
    </source>
</evidence>
<evidence type="ECO:0007829" key="11">
    <source>
        <dbReference type="PDB" id="2A7K"/>
    </source>
</evidence>
<keyword id="KW-0002">3D-structure</keyword>
<keyword id="KW-0045">Antibiotic biosynthesis</keyword>
<keyword id="KW-0808">Transferase</keyword>
<name>CARB_PECCC</name>